<name>RF1_SALEP</name>
<sequence length="360" mass="40461">MKPSIVAKLEALHERHEEVQALLGDAGIIADQDRFRALSREYAQLSDVSRCFTDWQQVQDDIETAQMMLDDPEMREMAQEELREAKEKSEQLEQQLQVLLLPKDPDDERNAFLEVRAGTGGDEAALFAGDLFRMYSRYAEARRWRVEIMSMSEGEHGGYKEIIAKISGDGVYGRLKFESGGHRVQRVPATESQGRIHTSACTVAVMPELPEAELPDINPADLRIDTFRSSGAGGQHVNTTDSAIRITHLPTGIVVECQDERSQHKNKAKALSVLGARIHAAETAKRQQAEASTRRNLLGSGDRSDRNRTYNFPQGRVTDHRINLTLYRLDETMEGKLDMLIEPIVQEHQADLLAALSEQE</sequence>
<gene>
    <name evidence="1" type="primary">prfA</name>
    <name type="ordered locus">SEN1263</name>
</gene>
<evidence type="ECO:0000255" key="1">
    <source>
        <dbReference type="HAMAP-Rule" id="MF_00093"/>
    </source>
</evidence>
<evidence type="ECO:0000256" key="2">
    <source>
        <dbReference type="SAM" id="MobiDB-lite"/>
    </source>
</evidence>
<comment type="function">
    <text evidence="1">Peptide chain release factor 1 directs the termination of translation in response to the peptide chain termination codons UAG and UAA.</text>
</comment>
<comment type="subcellular location">
    <subcellularLocation>
        <location evidence="1">Cytoplasm</location>
    </subcellularLocation>
</comment>
<comment type="PTM">
    <text evidence="1">Methylated by PrmC. Methylation increases the termination efficiency of RF1.</text>
</comment>
<comment type="similarity">
    <text evidence="1">Belongs to the prokaryotic/mitochondrial release factor family.</text>
</comment>
<feature type="chain" id="PRO_1000093498" description="Peptide chain release factor 1">
    <location>
        <begin position="1"/>
        <end position="360"/>
    </location>
</feature>
<feature type="region of interest" description="Disordered" evidence="2">
    <location>
        <begin position="284"/>
        <end position="313"/>
    </location>
</feature>
<feature type="modified residue" description="N5-methylglutamine" evidence="1">
    <location>
        <position position="235"/>
    </location>
</feature>
<proteinExistence type="inferred from homology"/>
<organism>
    <name type="scientific">Salmonella enteritidis PT4 (strain P125109)</name>
    <dbReference type="NCBI Taxonomy" id="550537"/>
    <lineage>
        <taxon>Bacteria</taxon>
        <taxon>Pseudomonadati</taxon>
        <taxon>Pseudomonadota</taxon>
        <taxon>Gammaproteobacteria</taxon>
        <taxon>Enterobacterales</taxon>
        <taxon>Enterobacteriaceae</taxon>
        <taxon>Salmonella</taxon>
    </lineage>
</organism>
<accession>B5R3J9</accession>
<keyword id="KW-0963">Cytoplasm</keyword>
<keyword id="KW-0488">Methylation</keyword>
<keyword id="KW-0648">Protein biosynthesis</keyword>
<protein>
    <recommendedName>
        <fullName evidence="1">Peptide chain release factor 1</fullName>
        <shortName evidence="1">RF-1</shortName>
    </recommendedName>
</protein>
<reference key="1">
    <citation type="journal article" date="2008" name="Genome Res.">
        <title>Comparative genome analysis of Salmonella enteritidis PT4 and Salmonella gallinarum 287/91 provides insights into evolutionary and host adaptation pathways.</title>
        <authorList>
            <person name="Thomson N.R."/>
            <person name="Clayton D.J."/>
            <person name="Windhorst D."/>
            <person name="Vernikos G."/>
            <person name="Davidson S."/>
            <person name="Churcher C."/>
            <person name="Quail M.A."/>
            <person name="Stevens M."/>
            <person name="Jones M.A."/>
            <person name="Watson M."/>
            <person name="Barron A."/>
            <person name="Layton A."/>
            <person name="Pickard D."/>
            <person name="Kingsley R.A."/>
            <person name="Bignell A."/>
            <person name="Clark L."/>
            <person name="Harris B."/>
            <person name="Ormond D."/>
            <person name="Abdellah Z."/>
            <person name="Brooks K."/>
            <person name="Cherevach I."/>
            <person name="Chillingworth T."/>
            <person name="Woodward J."/>
            <person name="Norberczak H."/>
            <person name="Lord A."/>
            <person name="Arrowsmith C."/>
            <person name="Jagels K."/>
            <person name="Moule S."/>
            <person name="Mungall K."/>
            <person name="Saunders M."/>
            <person name="Whitehead S."/>
            <person name="Chabalgoity J.A."/>
            <person name="Maskell D."/>
            <person name="Humphreys T."/>
            <person name="Roberts M."/>
            <person name="Barrow P.A."/>
            <person name="Dougan G."/>
            <person name="Parkhill J."/>
        </authorList>
    </citation>
    <scope>NUCLEOTIDE SEQUENCE [LARGE SCALE GENOMIC DNA]</scope>
    <source>
        <strain>P125109</strain>
    </source>
</reference>
<dbReference type="EMBL" id="AM933172">
    <property type="protein sequence ID" value="CAR32841.1"/>
    <property type="molecule type" value="Genomic_DNA"/>
</dbReference>
<dbReference type="RefSeq" id="WP_000804703.1">
    <property type="nucleotide sequence ID" value="NC_011294.1"/>
</dbReference>
<dbReference type="SMR" id="B5R3J9"/>
<dbReference type="KEGG" id="set:SEN1263"/>
<dbReference type="HOGENOM" id="CLU_036856_0_1_6"/>
<dbReference type="Proteomes" id="UP000000613">
    <property type="component" value="Chromosome"/>
</dbReference>
<dbReference type="GO" id="GO:0005737">
    <property type="term" value="C:cytoplasm"/>
    <property type="evidence" value="ECO:0007669"/>
    <property type="project" value="UniProtKB-SubCell"/>
</dbReference>
<dbReference type="GO" id="GO:0016149">
    <property type="term" value="F:translation release factor activity, codon specific"/>
    <property type="evidence" value="ECO:0007669"/>
    <property type="project" value="UniProtKB-UniRule"/>
</dbReference>
<dbReference type="FunFam" id="3.30.160.20:FF:000004">
    <property type="entry name" value="Peptide chain release factor 1"/>
    <property type="match status" value="1"/>
</dbReference>
<dbReference type="FunFam" id="3.30.70.1660:FF:000002">
    <property type="entry name" value="Peptide chain release factor 1"/>
    <property type="match status" value="1"/>
</dbReference>
<dbReference type="FunFam" id="3.30.70.1660:FF:000004">
    <property type="entry name" value="Peptide chain release factor 1"/>
    <property type="match status" value="1"/>
</dbReference>
<dbReference type="Gene3D" id="3.30.160.20">
    <property type="match status" value="1"/>
</dbReference>
<dbReference type="Gene3D" id="3.30.70.1660">
    <property type="match status" value="2"/>
</dbReference>
<dbReference type="Gene3D" id="6.10.140.1950">
    <property type="match status" value="1"/>
</dbReference>
<dbReference type="HAMAP" id="MF_00093">
    <property type="entry name" value="Rel_fac_1"/>
    <property type="match status" value="1"/>
</dbReference>
<dbReference type="InterPro" id="IPR005139">
    <property type="entry name" value="PCRF"/>
</dbReference>
<dbReference type="InterPro" id="IPR000352">
    <property type="entry name" value="Pep_chain_release_fac_I"/>
</dbReference>
<dbReference type="InterPro" id="IPR045853">
    <property type="entry name" value="Pep_chain_release_fac_I_sf"/>
</dbReference>
<dbReference type="InterPro" id="IPR050057">
    <property type="entry name" value="Prokaryotic/Mito_RF"/>
</dbReference>
<dbReference type="InterPro" id="IPR004373">
    <property type="entry name" value="RF-1"/>
</dbReference>
<dbReference type="NCBIfam" id="TIGR00019">
    <property type="entry name" value="prfA"/>
    <property type="match status" value="1"/>
</dbReference>
<dbReference type="NCBIfam" id="NF001859">
    <property type="entry name" value="PRK00591.1"/>
    <property type="match status" value="1"/>
</dbReference>
<dbReference type="PANTHER" id="PTHR43804">
    <property type="entry name" value="LD18447P"/>
    <property type="match status" value="1"/>
</dbReference>
<dbReference type="PANTHER" id="PTHR43804:SF7">
    <property type="entry name" value="LD18447P"/>
    <property type="match status" value="1"/>
</dbReference>
<dbReference type="Pfam" id="PF03462">
    <property type="entry name" value="PCRF"/>
    <property type="match status" value="1"/>
</dbReference>
<dbReference type="Pfam" id="PF00472">
    <property type="entry name" value="RF-1"/>
    <property type="match status" value="1"/>
</dbReference>
<dbReference type="SMART" id="SM00937">
    <property type="entry name" value="PCRF"/>
    <property type="match status" value="1"/>
</dbReference>
<dbReference type="SUPFAM" id="SSF75620">
    <property type="entry name" value="Release factor"/>
    <property type="match status" value="1"/>
</dbReference>
<dbReference type="PROSITE" id="PS00745">
    <property type="entry name" value="RF_PROK_I"/>
    <property type="match status" value="1"/>
</dbReference>